<keyword id="KW-0030">Aminoacyl-tRNA synthetase</keyword>
<keyword id="KW-0067">ATP-binding</keyword>
<keyword id="KW-0963">Cytoplasm</keyword>
<keyword id="KW-0436">Ligase</keyword>
<keyword id="KW-0479">Metal-binding</keyword>
<keyword id="KW-0547">Nucleotide-binding</keyword>
<keyword id="KW-0648">Protein biosynthesis</keyword>
<keyword id="KW-0694">RNA-binding</keyword>
<keyword id="KW-0820">tRNA-binding</keyword>
<keyword id="KW-0862">Zinc</keyword>
<comment type="function">
    <text evidence="1">Catalyzes the attachment of alanine to tRNA(Ala) in a two-step reaction: alanine is first activated by ATP to form Ala-AMP and then transferred to the acceptor end of tRNA(Ala). Also edits incorrectly charged Ser-tRNA(Ala) and Gly-tRNA(Ala) via its editing domain.</text>
</comment>
<comment type="catalytic activity">
    <reaction evidence="1">
        <text>tRNA(Ala) + L-alanine + ATP = L-alanyl-tRNA(Ala) + AMP + diphosphate</text>
        <dbReference type="Rhea" id="RHEA:12540"/>
        <dbReference type="Rhea" id="RHEA-COMP:9657"/>
        <dbReference type="Rhea" id="RHEA-COMP:9923"/>
        <dbReference type="ChEBI" id="CHEBI:30616"/>
        <dbReference type="ChEBI" id="CHEBI:33019"/>
        <dbReference type="ChEBI" id="CHEBI:57972"/>
        <dbReference type="ChEBI" id="CHEBI:78442"/>
        <dbReference type="ChEBI" id="CHEBI:78497"/>
        <dbReference type="ChEBI" id="CHEBI:456215"/>
        <dbReference type="EC" id="6.1.1.7"/>
    </reaction>
</comment>
<comment type="cofactor">
    <cofactor evidence="1">
        <name>Zn(2+)</name>
        <dbReference type="ChEBI" id="CHEBI:29105"/>
    </cofactor>
    <text evidence="1">Binds 1 zinc ion per subunit.</text>
</comment>
<comment type="subcellular location">
    <subcellularLocation>
        <location evidence="1">Cytoplasm</location>
    </subcellularLocation>
</comment>
<comment type="domain">
    <text evidence="1">Consists of three domains; the N-terminal catalytic domain, the editing domain and the C-terminal C-Ala domain. The editing domain removes incorrectly charged amino acids, while the C-Ala domain, along with tRNA(Ala), serves as a bridge to cooperatively bring together the editing and aminoacylation centers thus stimulating deacylation of misacylated tRNAs.</text>
</comment>
<comment type="similarity">
    <text evidence="1">Belongs to the class-II aminoacyl-tRNA synthetase family.</text>
</comment>
<dbReference type="EC" id="6.1.1.7" evidence="1"/>
<dbReference type="EMBL" id="AP009324">
    <property type="protein sequence ID" value="BAF78488.1"/>
    <property type="molecule type" value="Genomic_DNA"/>
</dbReference>
<dbReference type="RefSeq" id="WP_000734075.1">
    <property type="nucleotide sequence ID" value="NC_009782.1"/>
</dbReference>
<dbReference type="SMR" id="A7X328"/>
<dbReference type="KEGG" id="saw:SAHV_1605"/>
<dbReference type="HOGENOM" id="CLU_004485_1_1_9"/>
<dbReference type="GO" id="GO:0005829">
    <property type="term" value="C:cytosol"/>
    <property type="evidence" value="ECO:0007669"/>
    <property type="project" value="TreeGrafter"/>
</dbReference>
<dbReference type="GO" id="GO:0004813">
    <property type="term" value="F:alanine-tRNA ligase activity"/>
    <property type="evidence" value="ECO:0007669"/>
    <property type="project" value="UniProtKB-UniRule"/>
</dbReference>
<dbReference type="GO" id="GO:0002161">
    <property type="term" value="F:aminoacyl-tRNA deacylase activity"/>
    <property type="evidence" value="ECO:0007669"/>
    <property type="project" value="TreeGrafter"/>
</dbReference>
<dbReference type="GO" id="GO:0005524">
    <property type="term" value="F:ATP binding"/>
    <property type="evidence" value="ECO:0007669"/>
    <property type="project" value="UniProtKB-UniRule"/>
</dbReference>
<dbReference type="GO" id="GO:0140096">
    <property type="term" value="F:catalytic activity, acting on a protein"/>
    <property type="evidence" value="ECO:0007669"/>
    <property type="project" value="UniProtKB-ARBA"/>
</dbReference>
<dbReference type="GO" id="GO:0016740">
    <property type="term" value="F:transferase activity"/>
    <property type="evidence" value="ECO:0007669"/>
    <property type="project" value="UniProtKB-ARBA"/>
</dbReference>
<dbReference type="GO" id="GO:0000049">
    <property type="term" value="F:tRNA binding"/>
    <property type="evidence" value="ECO:0007669"/>
    <property type="project" value="UniProtKB-KW"/>
</dbReference>
<dbReference type="GO" id="GO:0008270">
    <property type="term" value="F:zinc ion binding"/>
    <property type="evidence" value="ECO:0007669"/>
    <property type="project" value="UniProtKB-UniRule"/>
</dbReference>
<dbReference type="GO" id="GO:0006419">
    <property type="term" value="P:alanyl-tRNA aminoacylation"/>
    <property type="evidence" value="ECO:0007669"/>
    <property type="project" value="UniProtKB-UniRule"/>
</dbReference>
<dbReference type="CDD" id="cd00673">
    <property type="entry name" value="AlaRS_core"/>
    <property type="match status" value="1"/>
</dbReference>
<dbReference type="FunFam" id="2.40.30.130:FF:000001">
    <property type="entry name" value="Alanine--tRNA ligase"/>
    <property type="match status" value="1"/>
</dbReference>
<dbReference type="FunFam" id="3.10.310.40:FF:000001">
    <property type="entry name" value="Alanine--tRNA ligase"/>
    <property type="match status" value="1"/>
</dbReference>
<dbReference type="FunFam" id="3.30.54.20:FF:000001">
    <property type="entry name" value="Alanine--tRNA ligase"/>
    <property type="match status" value="1"/>
</dbReference>
<dbReference type="FunFam" id="3.30.930.10:FF:000046">
    <property type="entry name" value="Alanine--tRNA ligase"/>
    <property type="match status" value="1"/>
</dbReference>
<dbReference type="FunFam" id="3.30.980.10:FF:000004">
    <property type="entry name" value="Alanine--tRNA ligase, cytoplasmic"/>
    <property type="match status" value="1"/>
</dbReference>
<dbReference type="Gene3D" id="2.40.30.130">
    <property type="match status" value="1"/>
</dbReference>
<dbReference type="Gene3D" id="3.10.310.40">
    <property type="match status" value="1"/>
</dbReference>
<dbReference type="Gene3D" id="3.30.54.20">
    <property type="match status" value="1"/>
</dbReference>
<dbReference type="Gene3D" id="3.30.930.10">
    <property type="entry name" value="Bira Bifunctional Protein, Domain 2"/>
    <property type="match status" value="1"/>
</dbReference>
<dbReference type="Gene3D" id="3.30.980.10">
    <property type="entry name" value="Threonyl-trna Synthetase, Chain A, domain 2"/>
    <property type="match status" value="1"/>
</dbReference>
<dbReference type="HAMAP" id="MF_00036_B">
    <property type="entry name" value="Ala_tRNA_synth_B"/>
    <property type="match status" value="1"/>
</dbReference>
<dbReference type="InterPro" id="IPR045864">
    <property type="entry name" value="aa-tRNA-synth_II/BPL/LPL"/>
</dbReference>
<dbReference type="InterPro" id="IPR002318">
    <property type="entry name" value="Ala-tRNA-lgiase_IIc"/>
</dbReference>
<dbReference type="InterPro" id="IPR018162">
    <property type="entry name" value="Ala-tRNA-ligase_IIc_anticod-bd"/>
</dbReference>
<dbReference type="InterPro" id="IPR018165">
    <property type="entry name" value="Ala-tRNA-synth_IIc_core"/>
</dbReference>
<dbReference type="InterPro" id="IPR018164">
    <property type="entry name" value="Ala-tRNA-synth_IIc_N"/>
</dbReference>
<dbReference type="InterPro" id="IPR050058">
    <property type="entry name" value="Ala-tRNA_ligase"/>
</dbReference>
<dbReference type="InterPro" id="IPR023033">
    <property type="entry name" value="Ala_tRNA_ligase_euk/bac"/>
</dbReference>
<dbReference type="InterPro" id="IPR003156">
    <property type="entry name" value="DHHA1_dom"/>
</dbReference>
<dbReference type="InterPro" id="IPR018163">
    <property type="entry name" value="Thr/Ala-tRNA-synth_IIc_edit"/>
</dbReference>
<dbReference type="InterPro" id="IPR009000">
    <property type="entry name" value="Transl_B-barrel_sf"/>
</dbReference>
<dbReference type="InterPro" id="IPR012947">
    <property type="entry name" value="tRNA_SAD"/>
</dbReference>
<dbReference type="NCBIfam" id="TIGR00344">
    <property type="entry name" value="alaS"/>
    <property type="match status" value="1"/>
</dbReference>
<dbReference type="PANTHER" id="PTHR11777:SF9">
    <property type="entry name" value="ALANINE--TRNA LIGASE, CYTOPLASMIC"/>
    <property type="match status" value="1"/>
</dbReference>
<dbReference type="PANTHER" id="PTHR11777">
    <property type="entry name" value="ALANYL-TRNA SYNTHETASE"/>
    <property type="match status" value="1"/>
</dbReference>
<dbReference type="Pfam" id="PF02272">
    <property type="entry name" value="DHHA1"/>
    <property type="match status" value="1"/>
</dbReference>
<dbReference type="Pfam" id="PF01411">
    <property type="entry name" value="tRNA-synt_2c"/>
    <property type="match status" value="1"/>
</dbReference>
<dbReference type="Pfam" id="PF07973">
    <property type="entry name" value="tRNA_SAD"/>
    <property type="match status" value="1"/>
</dbReference>
<dbReference type="PRINTS" id="PR00980">
    <property type="entry name" value="TRNASYNTHALA"/>
</dbReference>
<dbReference type="SMART" id="SM00863">
    <property type="entry name" value="tRNA_SAD"/>
    <property type="match status" value="1"/>
</dbReference>
<dbReference type="SUPFAM" id="SSF55681">
    <property type="entry name" value="Class II aaRS and biotin synthetases"/>
    <property type="match status" value="1"/>
</dbReference>
<dbReference type="SUPFAM" id="SSF101353">
    <property type="entry name" value="Putative anticodon-binding domain of alanyl-tRNA synthetase (AlaRS)"/>
    <property type="match status" value="1"/>
</dbReference>
<dbReference type="SUPFAM" id="SSF55186">
    <property type="entry name" value="ThrRS/AlaRS common domain"/>
    <property type="match status" value="1"/>
</dbReference>
<dbReference type="SUPFAM" id="SSF50447">
    <property type="entry name" value="Translation proteins"/>
    <property type="match status" value="1"/>
</dbReference>
<dbReference type="PROSITE" id="PS50860">
    <property type="entry name" value="AA_TRNA_LIGASE_II_ALA"/>
    <property type="match status" value="1"/>
</dbReference>
<proteinExistence type="inferred from homology"/>
<accession>A7X328</accession>
<name>SYA_STAA1</name>
<organism>
    <name type="scientific">Staphylococcus aureus (strain Mu3 / ATCC 700698)</name>
    <dbReference type="NCBI Taxonomy" id="418127"/>
    <lineage>
        <taxon>Bacteria</taxon>
        <taxon>Bacillati</taxon>
        <taxon>Bacillota</taxon>
        <taxon>Bacilli</taxon>
        <taxon>Bacillales</taxon>
        <taxon>Staphylococcaceae</taxon>
        <taxon>Staphylococcus</taxon>
    </lineage>
</organism>
<feature type="chain" id="PRO_0000347811" description="Alanine--tRNA ligase">
    <location>
        <begin position="1"/>
        <end position="876"/>
    </location>
</feature>
<feature type="binding site" evidence="1">
    <location>
        <position position="565"/>
    </location>
    <ligand>
        <name>Zn(2+)</name>
        <dbReference type="ChEBI" id="CHEBI:29105"/>
    </ligand>
</feature>
<feature type="binding site" evidence="1">
    <location>
        <position position="569"/>
    </location>
    <ligand>
        <name>Zn(2+)</name>
        <dbReference type="ChEBI" id="CHEBI:29105"/>
    </ligand>
</feature>
<feature type="binding site" evidence="1">
    <location>
        <position position="667"/>
    </location>
    <ligand>
        <name>Zn(2+)</name>
        <dbReference type="ChEBI" id="CHEBI:29105"/>
    </ligand>
</feature>
<feature type="binding site" evidence="1">
    <location>
        <position position="671"/>
    </location>
    <ligand>
        <name>Zn(2+)</name>
        <dbReference type="ChEBI" id="CHEBI:29105"/>
    </ligand>
</feature>
<sequence>MKKLKASEIRQKYLDFFVEKGHMVEPSAPLVPIDDDTLLWINSGVATLKKYFDGRETPKKPRIVNSQKAIRTNDIENVGFTARHHTFFEMLGNFSIGDYFKQEAIEFAWEFLTSDKWMGMEPDKLYVTIHPEDMEAYNIWHKDIGLEESRIIRIEGNFWDIGEGPSGPNTEIFYDRGEAYGQDDPAEEMYPGGENERYLEVWNLVFSEFNHNKDHSYTPLPNKNIDTGMGLERMASVSQNVRTNYETDLFMPIMNEIEKVSGKQYLVNNEQDVAFKVIADHIRTIAFAISDGALPANEGRGYVLRRLLRRAVRFSQTLGINEPFMYKLVDIVADIMEPYYPNVKEKADFIKRVIKSEEERFHETLEDGLAILNELIKKAKATTNEINGKDAFKLYDTYGFPIELTEEIAVQAGLKVDMTTFESEMQQQRDRARQARQNSQSMQVQSEVLKNITSASTFVGYDTATAQTTLTHLIYNGEEVSQVEAGETVYFMLTETPFYAVSGGQVADTGIVYNDNFEIAVSEVTKAPNGQNLHKGVVQFGQVNVGATVSAEVNQNDRRDIQKNHSATHLLHAALKSVLGDHVNQAGSLVEADRLRFDFSHFGPMTNDEIDQVERLVNEEIWKGIDVNIQEMDIASAKEMGAMALFGEKYGDVVRVVNMAPFSIELCGGIHVRNTSEIGLFKIVSESGTGAGVRRIEALTGKAAFLYLEDIQEKFNTMKSQMKVKSDDQVVEKLTQLQDEEKALLKQLEQRDKEITSLKMGNIEDQVEEINGYKVLVTEVDVPNAKAIRSTMDDFKSKLQDTIIILASNVDDKVSMVATVPKSLTNNVKAGDLIKQMAPIVGGKGGGRPDMAQGGGTQPENISKSLSFIKDYIKNL</sequence>
<evidence type="ECO:0000255" key="1">
    <source>
        <dbReference type="HAMAP-Rule" id="MF_00036"/>
    </source>
</evidence>
<reference key="1">
    <citation type="journal article" date="2008" name="Antimicrob. Agents Chemother.">
        <title>Mutated response regulator graR is responsible for phenotypic conversion of Staphylococcus aureus from heterogeneous vancomycin-intermediate resistance to vancomycin-intermediate resistance.</title>
        <authorList>
            <person name="Neoh H.-M."/>
            <person name="Cui L."/>
            <person name="Yuzawa H."/>
            <person name="Takeuchi F."/>
            <person name="Matsuo M."/>
            <person name="Hiramatsu K."/>
        </authorList>
    </citation>
    <scope>NUCLEOTIDE SEQUENCE [LARGE SCALE GENOMIC DNA]</scope>
    <source>
        <strain>Mu3 / ATCC 700698</strain>
    </source>
</reference>
<gene>
    <name evidence="1" type="primary">alaS</name>
    <name type="ordered locus">SAHV_1605</name>
</gene>
<protein>
    <recommendedName>
        <fullName evidence="1">Alanine--tRNA ligase</fullName>
        <ecNumber evidence="1">6.1.1.7</ecNumber>
    </recommendedName>
    <alternativeName>
        <fullName evidence="1">Alanyl-tRNA synthetase</fullName>
        <shortName evidence="1">AlaRS</shortName>
    </alternativeName>
</protein>